<sequence>SNQPQHFGDGTRLSIL</sequence>
<keyword id="KW-1064">Adaptive immunity</keyword>
<keyword id="KW-1003">Cell membrane</keyword>
<keyword id="KW-0391">Immunity</keyword>
<keyword id="KW-0472">Membrane</keyword>
<keyword id="KW-0675">Receptor</keyword>
<keyword id="KW-1185">Reference proteome</keyword>
<keyword id="KW-1279">T cell receptor</keyword>
<proteinExistence type="predicted"/>
<gene>
    <name evidence="6 7" type="primary">TRBJ1-5</name>
</gene>
<protein>
    <recommendedName>
        <fullName evidence="6">T cell receptor beta joining 1-5</fullName>
    </recommendedName>
</protein>
<name>TJB15_HUMAN</name>
<evidence type="ECO:0000303" key="1">
    <source>
    </source>
</evidence>
<evidence type="ECO:0000303" key="2">
    <source>
    </source>
</evidence>
<evidence type="ECO:0000303" key="3">
    <source>
    </source>
</evidence>
<evidence type="ECO:0000303" key="4">
    <source>
    </source>
</evidence>
<evidence type="ECO:0000303" key="5">
    <source>
    </source>
</evidence>
<evidence type="ECO:0000303" key="6">
    <source ref="2"/>
</evidence>
<evidence type="ECO:0000312" key="7">
    <source>
        <dbReference type="HGNC" id="HGNC:12166"/>
    </source>
</evidence>
<dbReference type="EMBL" id="AC239618">
    <property type="status" value="NOT_ANNOTATED_CDS"/>
    <property type="molecule type" value="Genomic_DNA"/>
</dbReference>
<dbReference type="EMBL" id="AC245427">
    <property type="status" value="NOT_ANNOTATED_CDS"/>
    <property type="molecule type" value="Genomic_DNA"/>
</dbReference>
<dbReference type="IMGT_GENE-DB" id="TRBJ1-5"/>
<dbReference type="BioMuta" id="ENSG00000282173"/>
<dbReference type="Ensembl" id="ENST00000633507.1">
    <property type="protein sequence ID" value="ENSP00000487943.1"/>
    <property type="gene ID" value="ENSG00000282215.1"/>
</dbReference>
<dbReference type="Ensembl" id="ENST00000634000.1">
    <property type="protein sequence ID" value="ENSP00000488469.1"/>
    <property type="gene ID" value="ENSG00000282173.1"/>
</dbReference>
<dbReference type="AGR" id="HGNC:12166"/>
<dbReference type="GeneCards" id="TRBJ1-5"/>
<dbReference type="HGNC" id="HGNC:12166">
    <property type="gene designation" value="TRBJ1-5"/>
</dbReference>
<dbReference type="HPA" id="ENSG00000282173">
    <property type="expression patterns" value="Tissue enriched (lymphoid)"/>
</dbReference>
<dbReference type="neXtProt" id="NX_A0A0J9YXM7"/>
<dbReference type="VEuPathDB" id="HostDB:ENSG00000282173"/>
<dbReference type="InParanoid" id="A0A0J9YXM7"/>
<dbReference type="PAN-GO" id="A0A0J9YXM7">
    <property type="GO annotations" value="0 GO annotations based on evolutionary models"/>
</dbReference>
<dbReference type="ChiTaRS" id="TRBJ1-5">
    <property type="organism name" value="human"/>
</dbReference>
<dbReference type="PRO" id="PR:A0A0J9YXM7"/>
<dbReference type="Proteomes" id="UP000005640">
    <property type="component" value="Chromosome 7"/>
</dbReference>
<dbReference type="Bgee" id="ENSG00000282173">
    <property type="expression patterns" value="Expressed in granulocyte and 87 other cell types or tissues"/>
</dbReference>
<dbReference type="GO" id="GO:0042101">
    <property type="term" value="C:T cell receptor complex"/>
    <property type="evidence" value="ECO:0007669"/>
    <property type="project" value="UniProtKB-KW"/>
</dbReference>
<dbReference type="GO" id="GO:0002250">
    <property type="term" value="P:adaptive immune response"/>
    <property type="evidence" value="ECO:0007669"/>
    <property type="project" value="UniProtKB-KW"/>
</dbReference>
<feature type="chain" id="PRO_0000447252" description="T cell receptor beta joining 1-5">
    <location>
        <begin position="1" status="less than"/>
        <end position="16" status="greater than"/>
    </location>
</feature>
<feature type="non-terminal residue">
    <location>
        <position position="1"/>
    </location>
</feature>
<feature type="non-terminal residue">
    <location>
        <position position="16"/>
    </location>
</feature>
<comment type="function">
    <text evidence="1 3 4 5">J region of the variable domain of T cell receptor (TR) beta chain that participates in the antigen recognition (PubMed:24600447). Alpha-beta T cell receptors are antigen specific receptors which are essential to the immune response and are present on the cell surface of T lymphocytes. Recognize peptide-major histocompatibility (MH) (pMH) complexes that are displayed by antigen presenting cells (APC), a prerequisite for efficient T cell adaptive immunity against pathogens (PubMed:25493333). Binding of alpha-beta TR to pMH complex initiates TR-CD3 clustering on the cell surface and intracellular activation of LCK that phosphorylates the ITAM motifs of CD3G, CD3D, CD3E and CD247 enabling the recruitment of ZAP70. In turn ZAP70 phosphorylates LAT, which recruits numerous signaling molecules to form the LAT signalosome. The LAT signalosome propagates signal branching to three major signaling pathways, the calcium, the mitogen-activated protein kinase (MAPK) kinase and the nuclear factor NF-kappa-B (NF-kB) pathways, leading to the mobilization of transcription factors that are critical for gene expression and essential for T cell growth and differentiation (PubMed:23524462). The T cell repertoire is generated in the thymus, by V-(D)-J rearrangement. This repertoire is then shaped by intrathymic selection events to generate a peripheral T cell pool of self-MH restricted, non-autoaggressive T cells. Post-thymic interaction of alpha-beta TR with the pMH complexes shapes TR structural and functional avidity (PubMed:15040585).</text>
</comment>
<comment type="subunit">
    <text evidence="2">Alpha-beta TR is a heterodimer composed of an alpha and beta chain; disulfide-linked. The alpha-beta TR is associated with the transmembrane signaling CD3 coreceptor proteins to form the TR-CD3 (TcR or TCR). The assembly of alpha-beta TR heterodimers with CD3 occurs in the endoplasmic reticulum where a single alpha-beta TR heterodimer associates with one CD3D-CD3E heterodimer, one CD3G-CD3E heterodimer and one CD247 homodimer forming a stable octameric structure. CD3D-CD3E and CD3G-CD3E heterodimers preferentially associate with TR alpha and TR beta chains, respectively. The association of the CD247 homodimer is the last step of TcR assembly in the endoplasmic reticulum and is required for transport to the cell surface.</text>
</comment>
<comment type="subcellular location">
    <subcellularLocation>
        <location evidence="2">Cell membrane</location>
    </subcellularLocation>
</comment>
<accession>A0A0J9YXM7</accession>
<reference key="1">
    <citation type="journal article" date="2003" name="Nature">
        <title>The DNA sequence of human chromosome 7.</title>
        <authorList>
            <person name="Hillier L.W."/>
            <person name="Fulton R.S."/>
            <person name="Fulton L.A."/>
            <person name="Graves T.A."/>
            <person name="Pepin K.H."/>
            <person name="Wagner-McPherson C."/>
            <person name="Layman D."/>
            <person name="Maas J."/>
            <person name="Jaeger S."/>
            <person name="Walker R."/>
            <person name="Wylie K."/>
            <person name="Sekhon M."/>
            <person name="Becker M.C."/>
            <person name="O'Laughlin M.D."/>
            <person name="Schaller M.E."/>
            <person name="Fewell G.A."/>
            <person name="Delehaunty K.D."/>
            <person name="Miner T.L."/>
            <person name="Nash W.E."/>
            <person name="Cordes M."/>
            <person name="Du H."/>
            <person name="Sun H."/>
            <person name="Edwards J."/>
            <person name="Bradshaw-Cordum H."/>
            <person name="Ali J."/>
            <person name="Andrews S."/>
            <person name="Isak A."/>
            <person name="Vanbrunt A."/>
            <person name="Nguyen C."/>
            <person name="Du F."/>
            <person name="Lamar B."/>
            <person name="Courtney L."/>
            <person name="Kalicki J."/>
            <person name="Ozersky P."/>
            <person name="Bielicki L."/>
            <person name="Scott K."/>
            <person name="Holmes A."/>
            <person name="Harkins R."/>
            <person name="Harris A."/>
            <person name="Strong C.M."/>
            <person name="Hou S."/>
            <person name="Tomlinson C."/>
            <person name="Dauphin-Kohlberg S."/>
            <person name="Kozlowicz-Reilly A."/>
            <person name="Leonard S."/>
            <person name="Rohlfing T."/>
            <person name="Rock S.M."/>
            <person name="Tin-Wollam A.-M."/>
            <person name="Abbott A."/>
            <person name="Minx P."/>
            <person name="Maupin R."/>
            <person name="Strowmatt C."/>
            <person name="Latreille P."/>
            <person name="Miller N."/>
            <person name="Johnson D."/>
            <person name="Murray J."/>
            <person name="Woessner J.P."/>
            <person name="Wendl M.C."/>
            <person name="Yang S.-P."/>
            <person name="Schultz B.R."/>
            <person name="Wallis J.W."/>
            <person name="Spieth J."/>
            <person name="Bieri T.A."/>
            <person name="Nelson J.O."/>
            <person name="Berkowicz N."/>
            <person name="Wohldmann P.E."/>
            <person name="Cook L.L."/>
            <person name="Hickenbotham M.T."/>
            <person name="Eldred J."/>
            <person name="Williams D."/>
            <person name="Bedell J.A."/>
            <person name="Mardis E.R."/>
            <person name="Clifton S.W."/>
            <person name="Chissoe S.L."/>
            <person name="Marra M.A."/>
            <person name="Raymond C."/>
            <person name="Haugen E."/>
            <person name="Gillett W."/>
            <person name="Zhou Y."/>
            <person name="James R."/>
            <person name="Phelps K."/>
            <person name="Iadanoto S."/>
            <person name="Bubb K."/>
            <person name="Simms E."/>
            <person name="Levy R."/>
            <person name="Clendenning J."/>
            <person name="Kaul R."/>
            <person name="Kent W.J."/>
            <person name="Furey T.S."/>
            <person name="Baertsch R.A."/>
            <person name="Brent M.R."/>
            <person name="Keibler E."/>
            <person name="Flicek P."/>
            <person name="Bork P."/>
            <person name="Suyama M."/>
            <person name="Bailey J.A."/>
            <person name="Portnoy M.E."/>
            <person name="Torrents D."/>
            <person name="Chinwalla A.T."/>
            <person name="Gish W.R."/>
            <person name="Eddy S.R."/>
            <person name="McPherson J.D."/>
            <person name="Olson M.V."/>
            <person name="Eichler E.E."/>
            <person name="Green E.D."/>
            <person name="Waterston R.H."/>
            <person name="Wilson R.K."/>
        </authorList>
    </citation>
    <scope>NUCLEOTIDE SEQUENCE [LARGE SCALE GENOMIC DNA] (IMGT ALLELE TRBJ1-5*01)</scope>
</reference>
<reference key="2">
    <citation type="book" date="2001" name="The T Cell Receptor FactsBook.">
        <title>The T Cell Receptor FactsBook.</title>
        <editorList>
            <person name="Lefranc M.P."/>
            <person name="Lefranc G."/>
        </editorList>
        <authorList>
            <person name="Lefranc M.P."/>
            <person name="Lefranc G."/>
        </authorList>
    </citation>
    <scope>NOMENCLATURE</scope>
</reference>
<reference key="3">
    <citation type="journal article" date="2004" name="Nat. Rev. Immunol.">
        <title>The many important facets of T-cell repertoire diversity.</title>
        <authorList>
            <person name="Nikolich-Zugich J."/>
            <person name="Slifka M.K."/>
            <person name="Messaoudi I."/>
        </authorList>
    </citation>
    <scope>REVIEW ON T CELL REPERTOIRE DIVERSITY</scope>
</reference>
<reference key="4">
    <citation type="journal article" date="2010" name="Cold Spring Harb. Perspect. Biol.">
        <title>Structural biology of the T-cell receptor: insights into receptor assembly, ligand recognition, and initiation of signaling.</title>
        <authorList>
            <person name="Wucherpfennig K.W."/>
            <person name="Gagnon E."/>
            <person name="Call M.J."/>
            <person name="Huseby E.S."/>
            <person name="Call M.E."/>
        </authorList>
    </citation>
    <scope>REVIEW ON T CELL RECEPTOR-CD3 COMPLEX ASSEMBLY</scope>
    <scope>SUBCELLULAR LOCATION</scope>
</reference>
<reference key="5">
    <citation type="journal article" date="2013" name="Nat. Rev. Immunol.">
        <title>T cell receptor signalling networks: branched, diversified and bounded.</title>
        <authorList>
            <person name="Brownlie R.J."/>
            <person name="Zamoyska R."/>
        </authorList>
    </citation>
    <scope>REVIEW ON T CELL RECEPTOR SIGNALING</scope>
</reference>
<reference key="6">
    <citation type="journal article" date="2014" name="Front. Immunol.">
        <title>Immunoglobulin and T Cell Receptor Genes: IMGT((R)) and the Birth and Rise of Immunoinformatics.</title>
        <authorList>
            <person name="Lefranc M.P."/>
        </authorList>
    </citation>
    <scope>NOMENCLATURE</scope>
</reference>
<reference key="7">
    <citation type="journal article" date="2015" name="Annu. Rev. Immunol.">
        <title>T cell antigen receptor recognition of antigen-presenting molecules.</title>
        <authorList>
            <person name="Rossjohn J."/>
            <person name="Gras S."/>
            <person name="Miles J.J."/>
            <person name="Turner S.J."/>
            <person name="Godfrey D.I."/>
            <person name="McCluskey J."/>
        </authorList>
    </citation>
    <scope>REVIEW ON FUNCTION</scope>
</reference>
<organism>
    <name type="scientific">Homo sapiens</name>
    <name type="common">Human</name>
    <dbReference type="NCBI Taxonomy" id="9606"/>
    <lineage>
        <taxon>Eukaryota</taxon>
        <taxon>Metazoa</taxon>
        <taxon>Chordata</taxon>
        <taxon>Craniata</taxon>
        <taxon>Vertebrata</taxon>
        <taxon>Euteleostomi</taxon>
        <taxon>Mammalia</taxon>
        <taxon>Eutheria</taxon>
        <taxon>Euarchontoglires</taxon>
        <taxon>Primates</taxon>
        <taxon>Haplorrhini</taxon>
        <taxon>Catarrhini</taxon>
        <taxon>Hominidae</taxon>
        <taxon>Homo</taxon>
    </lineage>
</organism>